<comment type="cofactor">
    <cofactor evidence="1">
        <name>Fe(2+)</name>
        <dbReference type="ChEBI" id="CHEBI:29033"/>
    </cofactor>
    <text evidence="1">Binds 1 Fe(2+) ion per subunit.</text>
</comment>
<comment type="cofactor">
    <cofactor evidence="1">
        <name>L-ascorbate</name>
        <dbReference type="ChEBI" id="CHEBI:38290"/>
    </cofactor>
</comment>
<name>Y6316_BRASO</name>
<sequence>MLICVPGILSKDDVAEFRHIMAESDWEDGRSTAGAQSAMVKRNEQLPPDSEVARRLGHRIISAMTANPRFLAAAIPQQIFPPLFNRYAADAGHQFGIHVDNAVRGDKLTGLRIRTDLSVTLFLSEPDEYDGGELVIEDLYGSHEVKLPAGDLVLYPASSLHMVTPVTRGVRVASFFWLQSMIRDPLARSMIFDLDTTIQGLSQRMGRDDPEMVRLTGLYHNLIRYWAET</sequence>
<keyword id="KW-0223">Dioxygenase</keyword>
<keyword id="KW-0408">Iron</keyword>
<keyword id="KW-0479">Metal-binding</keyword>
<keyword id="KW-0560">Oxidoreductase</keyword>
<keyword id="KW-1185">Reference proteome</keyword>
<keyword id="KW-0847">Vitamin C</keyword>
<evidence type="ECO:0000255" key="1">
    <source>
        <dbReference type="HAMAP-Rule" id="MF_00657"/>
    </source>
</evidence>
<reference key="1">
    <citation type="journal article" date="2007" name="Science">
        <title>Legumes symbioses: absence of nod genes in photosynthetic bradyrhizobia.</title>
        <authorList>
            <person name="Giraud E."/>
            <person name="Moulin L."/>
            <person name="Vallenet D."/>
            <person name="Barbe V."/>
            <person name="Cytryn E."/>
            <person name="Avarre J.-C."/>
            <person name="Jaubert M."/>
            <person name="Simon D."/>
            <person name="Cartieaux F."/>
            <person name="Prin Y."/>
            <person name="Bena G."/>
            <person name="Hannibal L."/>
            <person name="Fardoux J."/>
            <person name="Kojadinovic M."/>
            <person name="Vuillet L."/>
            <person name="Lajus A."/>
            <person name="Cruveiller S."/>
            <person name="Rouy Z."/>
            <person name="Mangenot S."/>
            <person name="Segurens B."/>
            <person name="Dossat C."/>
            <person name="Franck W.L."/>
            <person name="Chang W.-S."/>
            <person name="Saunders E."/>
            <person name="Bruce D."/>
            <person name="Richardson P."/>
            <person name="Normand P."/>
            <person name="Dreyfus B."/>
            <person name="Pignol D."/>
            <person name="Stacey G."/>
            <person name="Emerich D."/>
            <person name="Vermeglio A."/>
            <person name="Medigue C."/>
            <person name="Sadowsky M."/>
        </authorList>
    </citation>
    <scope>NUCLEOTIDE SEQUENCE [LARGE SCALE GENOMIC DNA]</scope>
    <source>
        <strain>ORS 278</strain>
    </source>
</reference>
<organism>
    <name type="scientific">Bradyrhizobium sp. (strain ORS 278)</name>
    <dbReference type="NCBI Taxonomy" id="114615"/>
    <lineage>
        <taxon>Bacteria</taxon>
        <taxon>Pseudomonadati</taxon>
        <taxon>Pseudomonadota</taxon>
        <taxon>Alphaproteobacteria</taxon>
        <taxon>Hyphomicrobiales</taxon>
        <taxon>Nitrobacteraceae</taxon>
        <taxon>Bradyrhizobium</taxon>
    </lineage>
</organism>
<protein>
    <recommendedName>
        <fullName evidence="1">PKHD-type hydroxylase BRADO6316</fullName>
        <ecNumber evidence="1">1.14.11.-</ecNumber>
    </recommendedName>
</protein>
<gene>
    <name type="ordered locus">BRADO6316</name>
</gene>
<feature type="chain" id="PRO_0000346466" description="PKHD-type hydroxylase BRADO6316">
    <location>
        <begin position="1"/>
        <end position="229"/>
    </location>
</feature>
<feature type="domain" description="Fe2OG dioxygenase" evidence="1">
    <location>
        <begin position="78"/>
        <end position="180"/>
    </location>
</feature>
<feature type="binding site" evidence="1">
    <location>
        <position position="98"/>
    </location>
    <ligand>
        <name>Fe cation</name>
        <dbReference type="ChEBI" id="CHEBI:24875"/>
    </ligand>
</feature>
<feature type="binding site" evidence="1">
    <location>
        <position position="100"/>
    </location>
    <ligand>
        <name>Fe cation</name>
        <dbReference type="ChEBI" id="CHEBI:24875"/>
    </ligand>
</feature>
<feature type="binding site" evidence="1">
    <location>
        <position position="161"/>
    </location>
    <ligand>
        <name>Fe cation</name>
        <dbReference type="ChEBI" id="CHEBI:24875"/>
    </ligand>
</feature>
<feature type="binding site" evidence="1">
    <location>
        <position position="171"/>
    </location>
    <ligand>
        <name>2-oxoglutarate</name>
        <dbReference type="ChEBI" id="CHEBI:16810"/>
    </ligand>
</feature>
<dbReference type="EC" id="1.14.11.-" evidence="1"/>
<dbReference type="EMBL" id="CU234118">
    <property type="protein sequence ID" value="CAL79952.1"/>
    <property type="molecule type" value="Genomic_DNA"/>
</dbReference>
<dbReference type="RefSeq" id="WP_012029836.1">
    <property type="nucleotide sequence ID" value="NC_009445.1"/>
</dbReference>
<dbReference type="SMR" id="A4Z1C6"/>
<dbReference type="STRING" id="114615.BRADO6316"/>
<dbReference type="KEGG" id="bra:BRADO6316"/>
<dbReference type="eggNOG" id="COG3128">
    <property type="taxonomic scope" value="Bacteria"/>
</dbReference>
<dbReference type="HOGENOM" id="CLU_106663_0_0_5"/>
<dbReference type="OrthoDB" id="9812472at2"/>
<dbReference type="Proteomes" id="UP000001994">
    <property type="component" value="Chromosome"/>
</dbReference>
<dbReference type="GO" id="GO:0016706">
    <property type="term" value="F:2-oxoglutarate-dependent dioxygenase activity"/>
    <property type="evidence" value="ECO:0007669"/>
    <property type="project" value="UniProtKB-UniRule"/>
</dbReference>
<dbReference type="GO" id="GO:0005506">
    <property type="term" value="F:iron ion binding"/>
    <property type="evidence" value="ECO:0007669"/>
    <property type="project" value="UniProtKB-UniRule"/>
</dbReference>
<dbReference type="GO" id="GO:0031418">
    <property type="term" value="F:L-ascorbic acid binding"/>
    <property type="evidence" value="ECO:0007669"/>
    <property type="project" value="UniProtKB-KW"/>
</dbReference>
<dbReference type="GO" id="GO:0006974">
    <property type="term" value="P:DNA damage response"/>
    <property type="evidence" value="ECO:0007669"/>
    <property type="project" value="TreeGrafter"/>
</dbReference>
<dbReference type="GO" id="GO:0006879">
    <property type="term" value="P:intracellular iron ion homeostasis"/>
    <property type="evidence" value="ECO:0007669"/>
    <property type="project" value="TreeGrafter"/>
</dbReference>
<dbReference type="Gene3D" id="2.60.120.620">
    <property type="entry name" value="q2cbj1_9rhob like domain"/>
    <property type="match status" value="1"/>
</dbReference>
<dbReference type="Gene3D" id="4.10.860.20">
    <property type="entry name" value="Rabenosyn, Rab binding domain"/>
    <property type="match status" value="1"/>
</dbReference>
<dbReference type="HAMAP" id="MF_00657">
    <property type="entry name" value="Hydroxyl_YbiX"/>
    <property type="match status" value="1"/>
</dbReference>
<dbReference type="InterPro" id="IPR005123">
    <property type="entry name" value="Oxoglu/Fe-dep_dioxygenase_dom"/>
</dbReference>
<dbReference type="InterPro" id="IPR041097">
    <property type="entry name" value="PKHD_C"/>
</dbReference>
<dbReference type="InterPro" id="IPR023550">
    <property type="entry name" value="PKHD_hydroxylase"/>
</dbReference>
<dbReference type="InterPro" id="IPR006620">
    <property type="entry name" value="Pro_4_hyd_alph"/>
</dbReference>
<dbReference type="InterPro" id="IPR044862">
    <property type="entry name" value="Pro_4_hyd_alph_FE2OG_OXY"/>
</dbReference>
<dbReference type="NCBIfam" id="NF003973">
    <property type="entry name" value="PRK05467.1-2"/>
    <property type="match status" value="1"/>
</dbReference>
<dbReference type="NCBIfam" id="NF003974">
    <property type="entry name" value="PRK05467.1-3"/>
    <property type="match status" value="1"/>
</dbReference>
<dbReference type="NCBIfam" id="NF003975">
    <property type="entry name" value="PRK05467.1-4"/>
    <property type="match status" value="1"/>
</dbReference>
<dbReference type="PANTHER" id="PTHR41536">
    <property type="entry name" value="PKHD-TYPE HYDROXYLASE YBIX"/>
    <property type="match status" value="1"/>
</dbReference>
<dbReference type="PANTHER" id="PTHR41536:SF1">
    <property type="entry name" value="PKHD-TYPE HYDROXYLASE YBIX"/>
    <property type="match status" value="1"/>
</dbReference>
<dbReference type="Pfam" id="PF13640">
    <property type="entry name" value="2OG-FeII_Oxy_3"/>
    <property type="match status" value="1"/>
</dbReference>
<dbReference type="Pfam" id="PF18331">
    <property type="entry name" value="PKHD_C"/>
    <property type="match status" value="1"/>
</dbReference>
<dbReference type="SMART" id="SM00702">
    <property type="entry name" value="P4Hc"/>
    <property type="match status" value="1"/>
</dbReference>
<dbReference type="PROSITE" id="PS51471">
    <property type="entry name" value="FE2OG_OXY"/>
    <property type="match status" value="1"/>
</dbReference>
<accession>A4Z1C6</accession>
<proteinExistence type="inferred from homology"/>